<organism>
    <name type="scientific">Pectobacterium carotovorum subsp. carotovorum (strain PC1)</name>
    <dbReference type="NCBI Taxonomy" id="561230"/>
    <lineage>
        <taxon>Bacteria</taxon>
        <taxon>Pseudomonadati</taxon>
        <taxon>Pseudomonadota</taxon>
        <taxon>Gammaproteobacteria</taxon>
        <taxon>Enterobacterales</taxon>
        <taxon>Pectobacteriaceae</taxon>
        <taxon>Pectobacterium</taxon>
    </lineage>
</organism>
<evidence type="ECO:0000255" key="1">
    <source>
        <dbReference type="HAMAP-Rule" id="MF_01374"/>
    </source>
</evidence>
<proteinExistence type="inferred from homology"/>
<feature type="chain" id="PRO_1000215086" description="Hydroxyacylglutathione hydrolase">
    <location>
        <begin position="1"/>
        <end position="251"/>
    </location>
</feature>
<feature type="binding site" evidence="1">
    <location>
        <position position="53"/>
    </location>
    <ligand>
        <name>Zn(2+)</name>
        <dbReference type="ChEBI" id="CHEBI:29105"/>
        <label>1</label>
    </ligand>
</feature>
<feature type="binding site" evidence="1">
    <location>
        <position position="55"/>
    </location>
    <ligand>
        <name>Zn(2+)</name>
        <dbReference type="ChEBI" id="CHEBI:29105"/>
        <label>1</label>
    </ligand>
</feature>
<feature type="binding site" evidence="1">
    <location>
        <position position="57"/>
    </location>
    <ligand>
        <name>Zn(2+)</name>
        <dbReference type="ChEBI" id="CHEBI:29105"/>
        <label>2</label>
    </ligand>
</feature>
<feature type="binding site" evidence="1">
    <location>
        <position position="58"/>
    </location>
    <ligand>
        <name>Zn(2+)</name>
        <dbReference type="ChEBI" id="CHEBI:29105"/>
        <label>2</label>
    </ligand>
</feature>
<feature type="binding site" evidence="1">
    <location>
        <position position="110"/>
    </location>
    <ligand>
        <name>Zn(2+)</name>
        <dbReference type="ChEBI" id="CHEBI:29105"/>
        <label>1</label>
    </ligand>
</feature>
<feature type="binding site" evidence="1">
    <location>
        <position position="127"/>
    </location>
    <ligand>
        <name>Zn(2+)</name>
        <dbReference type="ChEBI" id="CHEBI:29105"/>
        <label>1</label>
    </ligand>
</feature>
<feature type="binding site" evidence="1">
    <location>
        <position position="127"/>
    </location>
    <ligand>
        <name>Zn(2+)</name>
        <dbReference type="ChEBI" id="CHEBI:29105"/>
        <label>2</label>
    </ligand>
</feature>
<feature type="binding site" evidence="1">
    <location>
        <position position="165"/>
    </location>
    <ligand>
        <name>Zn(2+)</name>
        <dbReference type="ChEBI" id="CHEBI:29105"/>
        <label>2</label>
    </ligand>
</feature>
<comment type="function">
    <text evidence="1">Thiolesterase that catalyzes the hydrolysis of S-D-lactoyl-glutathione to form glutathione and D-lactic acid.</text>
</comment>
<comment type="catalytic activity">
    <reaction evidence="1">
        <text>an S-(2-hydroxyacyl)glutathione + H2O = a 2-hydroxy carboxylate + glutathione + H(+)</text>
        <dbReference type="Rhea" id="RHEA:21864"/>
        <dbReference type="ChEBI" id="CHEBI:15377"/>
        <dbReference type="ChEBI" id="CHEBI:15378"/>
        <dbReference type="ChEBI" id="CHEBI:57925"/>
        <dbReference type="ChEBI" id="CHEBI:58896"/>
        <dbReference type="ChEBI" id="CHEBI:71261"/>
        <dbReference type="EC" id="3.1.2.6"/>
    </reaction>
</comment>
<comment type="cofactor">
    <cofactor evidence="1">
        <name>Zn(2+)</name>
        <dbReference type="ChEBI" id="CHEBI:29105"/>
    </cofactor>
    <text evidence="1">Binds 2 Zn(2+) ions per subunit.</text>
</comment>
<comment type="pathway">
    <text evidence="1">Secondary metabolite metabolism; methylglyoxal degradation; (R)-lactate from methylglyoxal: step 2/2.</text>
</comment>
<comment type="subunit">
    <text evidence="1">Monomer.</text>
</comment>
<comment type="similarity">
    <text evidence="1">Belongs to the metallo-beta-lactamase superfamily. Glyoxalase II family.</text>
</comment>
<dbReference type="EC" id="3.1.2.6" evidence="1"/>
<dbReference type="EMBL" id="CP001657">
    <property type="protein sequence ID" value="ACT14161.1"/>
    <property type="molecule type" value="Genomic_DNA"/>
</dbReference>
<dbReference type="RefSeq" id="WP_015841302.1">
    <property type="nucleotide sequence ID" value="NC_012917.1"/>
</dbReference>
<dbReference type="SMR" id="C6DC67"/>
<dbReference type="STRING" id="561230.PC1_3138"/>
<dbReference type="KEGG" id="pct:PC1_3138"/>
<dbReference type="eggNOG" id="COG0491">
    <property type="taxonomic scope" value="Bacteria"/>
</dbReference>
<dbReference type="HOGENOM" id="CLU_030571_4_1_6"/>
<dbReference type="OrthoDB" id="9802248at2"/>
<dbReference type="UniPathway" id="UPA00619">
    <property type="reaction ID" value="UER00676"/>
</dbReference>
<dbReference type="Proteomes" id="UP000002736">
    <property type="component" value="Chromosome"/>
</dbReference>
<dbReference type="GO" id="GO:0004416">
    <property type="term" value="F:hydroxyacylglutathione hydrolase activity"/>
    <property type="evidence" value="ECO:0007669"/>
    <property type="project" value="UniProtKB-UniRule"/>
</dbReference>
<dbReference type="GO" id="GO:0046872">
    <property type="term" value="F:metal ion binding"/>
    <property type="evidence" value="ECO:0007669"/>
    <property type="project" value="UniProtKB-KW"/>
</dbReference>
<dbReference type="GO" id="GO:0019243">
    <property type="term" value="P:methylglyoxal catabolic process to D-lactate via S-lactoyl-glutathione"/>
    <property type="evidence" value="ECO:0007669"/>
    <property type="project" value="InterPro"/>
</dbReference>
<dbReference type="CDD" id="cd07723">
    <property type="entry name" value="hydroxyacylglutathione_hydrolase_MBL-fold"/>
    <property type="match status" value="1"/>
</dbReference>
<dbReference type="Gene3D" id="3.60.15.10">
    <property type="entry name" value="Ribonuclease Z/Hydroxyacylglutathione hydrolase-like"/>
    <property type="match status" value="1"/>
</dbReference>
<dbReference type="HAMAP" id="MF_01374">
    <property type="entry name" value="Glyoxalase_2"/>
    <property type="match status" value="1"/>
</dbReference>
<dbReference type="InterPro" id="IPR035680">
    <property type="entry name" value="Clx_II_MBL"/>
</dbReference>
<dbReference type="InterPro" id="IPR050110">
    <property type="entry name" value="Glyoxalase_II_hydrolase"/>
</dbReference>
<dbReference type="InterPro" id="IPR032282">
    <property type="entry name" value="HAGH_C"/>
</dbReference>
<dbReference type="InterPro" id="IPR017782">
    <property type="entry name" value="Hydroxyacylglutathione_Hdrlase"/>
</dbReference>
<dbReference type="InterPro" id="IPR001279">
    <property type="entry name" value="Metallo-B-lactamas"/>
</dbReference>
<dbReference type="InterPro" id="IPR036866">
    <property type="entry name" value="RibonucZ/Hydroxyglut_hydro"/>
</dbReference>
<dbReference type="NCBIfam" id="TIGR03413">
    <property type="entry name" value="GSH_gloB"/>
    <property type="match status" value="1"/>
</dbReference>
<dbReference type="PANTHER" id="PTHR43705">
    <property type="entry name" value="HYDROXYACYLGLUTATHIONE HYDROLASE"/>
    <property type="match status" value="1"/>
</dbReference>
<dbReference type="PANTHER" id="PTHR43705:SF1">
    <property type="entry name" value="HYDROXYACYLGLUTATHIONE HYDROLASE GLOB"/>
    <property type="match status" value="1"/>
</dbReference>
<dbReference type="Pfam" id="PF16123">
    <property type="entry name" value="HAGH_C"/>
    <property type="match status" value="1"/>
</dbReference>
<dbReference type="Pfam" id="PF00753">
    <property type="entry name" value="Lactamase_B"/>
    <property type="match status" value="1"/>
</dbReference>
<dbReference type="PIRSF" id="PIRSF005457">
    <property type="entry name" value="Glx"/>
    <property type="match status" value="1"/>
</dbReference>
<dbReference type="SMART" id="SM00849">
    <property type="entry name" value="Lactamase_B"/>
    <property type="match status" value="1"/>
</dbReference>
<dbReference type="SUPFAM" id="SSF56281">
    <property type="entry name" value="Metallo-hydrolase/oxidoreductase"/>
    <property type="match status" value="1"/>
</dbReference>
<keyword id="KW-0378">Hydrolase</keyword>
<keyword id="KW-0479">Metal-binding</keyword>
<keyword id="KW-0862">Zinc</keyword>
<protein>
    <recommendedName>
        <fullName evidence="1">Hydroxyacylglutathione hydrolase</fullName>
        <ecNumber evidence="1">3.1.2.6</ecNumber>
    </recommendedName>
    <alternativeName>
        <fullName evidence="1">Glyoxalase II</fullName>
        <shortName evidence="1">Glx II</shortName>
    </alternativeName>
</protein>
<reference key="1">
    <citation type="submission" date="2009-07" db="EMBL/GenBank/DDBJ databases">
        <title>Complete sequence of Pectobacterium carotovorum subsp. carotovorum PC1.</title>
        <authorList>
            <consortium name="US DOE Joint Genome Institute"/>
            <person name="Lucas S."/>
            <person name="Copeland A."/>
            <person name="Lapidus A."/>
            <person name="Glavina del Rio T."/>
            <person name="Tice H."/>
            <person name="Bruce D."/>
            <person name="Goodwin L."/>
            <person name="Pitluck S."/>
            <person name="Munk A.C."/>
            <person name="Brettin T."/>
            <person name="Detter J.C."/>
            <person name="Han C."/>
            <person name="Tapia R."/>
            <person name="Larimer F."/>
            <person name="Land M."/>
            <person name="Hauser L."/>
            <person name="Kyrpides N."/>
            <person name="Mikhailova N."/>
            <person name="Balakrishnan V."/>
            <person name="Glasner J."/>
            <person name="Perna N.T."/>
        </authorList>
    </citation>
    <scope>NUCLEOTIDE SEQUENCE [LARGE SCALE GENOMIC DNA]</scope>
    <source>
        <strain>PC1</strain>
    </source>
</reference>
<gene>
    <name evidence="1" type="primary">gloB</name>
    <name type="ordered locus">PC1_3138</name>
</gene>
<accession>C6DC67</accession>
<name>GLO2_PECCP</name>
<sequence length="251" mass="28343">MNLISIPALQDNYIWLLSNKENRCVIVDPGEASPVLDALAQHALFPEAILLTHHHNDHVGGVHELLKHYPNLPVFGPKETAKCGATSLLEEGNTVSLLNSEFSVIEVPGHTSGHIAYYNAPFLFCGDTLFSAGCGRIFEGTPRQMYESIQKIAVLPDDTVICCAHEYTLSNLRFSNAIWPEDQSIEAYLHEISQIREKSQSSLPTTLGLERRINLFLRCHELDLKRKLSKEPENIENWQVFEMLRSKKDCF</sequence>